<sequence>MASDWRRQSTSRGIPNEGQNDEKGKPLIGRSFLLEIENRILRTNVAEGLHISGATIIDSFDDASPQCVISDHPMAQKLEKAKKDDPLFKNEKMLKIMPALLRQAVNRNIKVRTPERFLNQMNTWLDRQGKTTSATTSNSTIRGKPSFGRENSAKIERTTPRLVPRMPRVSSDQTSSRPKEERCFLRIDVPGKRPEIRNVSKESFSIVYSGRDTGFSIFKAAESSLVERRQREYDSFLKGKYEPSKKTFKFDERDNYCQFCQKTILGDRKDHERTDEHRNKARTQGITQTMERIVLNARLRAERQEAALKRNQRKSRESVMFVEKSKRANVEYEYGENEIKANWLMLKANTVEKTTEKTSILSPRRRQKRMRSLSSQGDI</sequence>
<dbReference type="EMBL" id="Z27080">
    <property type="protein sequence ID" value="CAA81604.3"/>
    <property type="molecule type" value="Genomic_DNA"/>
</dbReference>
<dbReference type="PIR" id="S40990">
    <property type="entry name" value="S40990"/>
</dbReference>
<dbReference type="RefSeq" id="NP_499096.2">
    <property type="nucleotide sequence ID" value="NM_066695.7"/>
</dbReference>
<dbReference type="BioGRID" id="41536">
    <property type="interactions" value="8"/>
</dbReference>
<dbReference type="FunCoup" id="P34467">
    <property type="interactions" value="271"/>
</dbReference>
<dbReference type="IntAct" id="P34467">
    <property type="interactions" value="5"/>
</dbReference>
<dbReference type="STRING" id="6239.F55H2.7.1"/>
<dbReference type="PaxDb" id="6239-F55H2.7.2"/>
<dbReference type="EnsemblMetazoa" id="F55H2.7.1">
    <property type="protein sequence ID" value="F55H2.7.1"/>
    <property type="gene ID" value="WBGene00010132"/>
</dbReference>
<dbReference type="GeneID" id="176340"/>
<dbReference type="KEGG" id="cel:CELE_F55H2.7"/>
<dbReference type="UCSC" id="F55H2.7.1">
    <property type="organism name" value="c. elegans"/>
</dbReference>
<dbReference type="AGR" id="WB:WBGene00010132"/>
<dbReference type="CTD" id="176340"/>
<dbReference type="WormBase" id="F55H2.7">
    <property type="protein sequence ID" value="CE34033"/>
    <property type="gene ID" value="WBGene00010132"/>
</dbReference>
<dbReference type="eggNOG" id="ENOG502T1A8">
    <property type="taxonomic scope" value="Eukaryota"/>
</dbReference>
<dbReference type="HOGENOM" id="CLU_736169_0_0_1"/>
<dbReference type="InParanoid" id="P34467"/>
<dbReference type="OMA" id="RTDEHRN"/>
<dbReference type="OrthoDB" id="21380at2759"/>
<dbReference type="PRO" id="PR:P34467"/>
<dbReference type="Proteomes" id="UP000001940">
    <property type="component" value="Chromosome III"/>
</dbReference>
<dbReference type="Bgee" id="WBGene00010132">
    <property type="expression patterns" value="Expressed in germ line (C elegans) and 4 other cell types or tissues"/>
</dbReference>
<keyword id="KW-1185">Reference proteome</keyword>
<proteinExistence type="predicted"/>
<reference key="1">
    <citation type="journal article" date="1994" name="Nature">
        <title>2.2 Mb of contiguous nucleotide sequence from chromosome III of C. elegans.</title>
        <authorList>
            <person name="Wilson R."/>
            <person name="Ainscough R."/>
            <person name="Anderson K."/>
            <person name="Baynes C."/>
            <person name="Berks M."/>
            <person name="Bonfield J."/>
            <person name="Burton J."/>
            <person name="Connell M."/>
            <person name="Copsey T."/>
            <person name="Cooper J."/>
            <person name="Coulson A."/>
            <person name="Craxton M."/>
            <person name="Dear S."/>
            <person name="Du Z."/>
            <person name="Durbin R."/>
            <person name="Favello A."/>
            <person name="Fraser A."/>
            <person name="Fulton L."/>
            <person name="Gardner A."/>
            <person name="Green P."/>
            <person name="Hawkins T."/>
            <person name="Hillier L."/>
            <person name="Jier M."/>
            <person name="Johnston L."/>
            <person name="Jones M."/>
            <person name="Kershaw J."/>
            <person name="Kirsten J."/>
            <person name="Laisster N."/>
            <person name="Latreille P."/>
            <person name="Lightning J."/>
            <person name="Lloyd C."/>
            <person name="Mortimore B."/>
            <person name="O'Callaghan M."/>
            <person name="Parsons J."/>
            <person name="Percy C."/>
            <person name="Rifken L."/>
            <person name="Roopra A."/>
            <person name="Saunders D."/>
            <person name="Shownkeen R."/>
            <person name="Sims M."/>
            <person name="Smaldon N."/>
            <person name="Smith A."/>
            <person name="Smith M."/>
            <person name="Sonnhammer E."/>
            <person name="Staden R."/>
            <person name="Sulston J."/>
            <person name="Thierry-Mieg J."/>
            <person name="Thomas K."/>
            <person name="Vaudin M."/>
            <person name="Vaughan K."/>
            <person name="Waterston R."/>
            <person name="Watson A."/>
            <person name="Weinstock L."/>
            <person name="Wilkinson-Sproat J."/>
            <person name="Wohldman P."/>
        </authorList>
    </citation>
    <scope>NUCLEOTIDE SEQUENCE [LARGE SCALE GENOMIC DNA]</scope>
    <source>
        <strain>Bristol N2</strain>
    </source>
</reference>
<reference key="2">
    <citation type="journal article" date="1998" name="Science">
        <title>Genome sequence of the nematode C. elegans: a platform for investigating biology.</title>
        <authorList>
            <consortium name="The C. elegans sequencing consortium"/>
        </authorList>
    </citation>
    <scope>NUCLEOTIDE SEQUENCE [LARGE SCALE GENOMIC DNA]</scope>
    <source>
        <strain>Bristol N2</strain>
    </source>
</reference>
<feature type="chain" id="PRO_0000065371" description="Uncharacterized protein F55H2.7">
    <location>
        <begin position="1"/>
        <end position="379"/>
    </location>
</feature>
<feature type="region of interest" description="Disordered" evidence="1">
    <location>
        <begin position="1"/>
        <end position="25"/>
    </location>
</feature>
<feature type="region of interest" description="Disordered" evidence="1">
    <location>
        <begin position="128"/>
        <end position="158"/>
    </location>
</feature>
<feature type="region of interest" description="Disordered" evidence="1">
    <location>
        <begin position="355"/>
        <end position="379"/>
    </location>
</feature>
<feature type="compositionally biased region" description="Polar residues" evidence="1">
    <location>
        <begin position="128"/>
        <end position="141"/>
    </location>
</feature>
<protein>
    <recommendedName>
        <fullName>Uncharacterized protein F55H2.7</fullName>
    </recommendedName>
</protein>
<evidence type="ECO:0000256" key="1">
    <source>
        <dbReference type="SAM" id="MobiDB-lite"/>
    </source>
</evidence>
<name>YMF7_CAEEL</name>
<accession>P34467</accession>
<organism>
    <name type="scientific">Caenorhabditis elegans</name>
    <dbReference type="NCBI Taxonomy" id="6239"/>
    <lineage>
        <taxon>Eukaryota</taxon>
        <taxon>Metazoa</taxon>
        <taxon>Ecdysozoa</taxon>
        <taxon>Nematoda</taxon>
        <taxon>Chromadorea</taxon>
        <taxon>Rhabditida</taxon>
        <taxon>Rhabditina</taxon>
        <taxon>Rhabditomorpha</taxon>
        <taxon>Rhabditoidea</taxon>
        <taxon>Rhabditidae</taxon>
        <taxon>Peloderinae</taxon>
        <taxon>Caenorhabditis</taxon>
    </lineage>
</organism>
<gene>
    <name type="ORF">F55H2.7</name>
</gene>